<keyword id="KW-1185">Reference proteome</keyword>
<dbReference type="EMBL" id="MN908947">
    <property type="status" value="NOT_ANNOTATED_CDS"/>
    <property type="molecule type" value="Genomic_RNA"/>
</dbReference>
<dbReference type="SMR" id="P0DTG1"/>
<dbReference type="PRO" id="PR:P0DTG1"/>
<dbReference type="Proteomes" id="UP000464024">
    <property type="component" value="Genome"/>
</dbReference>
<comment type="function">
    <text evidence="1">May play a role in host modulation.</text>
</comment>
<accession>P0DTG1</accession>
<reference key="1">
    <citation type="journal article" date="2020" name="Nature">
        <title>A new coronavirus associated with human respiratory disease in China.</title>
        <authorList>
            <person name="Wu F."/>
            <person name="Zhao S."/>
            <person name="Yu B."/>
            <person name="Chen Y.-M."/>
            <person name="Wang W."/>
            <person name="Song Z.-G."/>
            <person name="Hu Y."/>
            <person name="Tao Z.-W."/>
            <person name="Tian J.-H."/>
            <person name="Pei Y.-Y."/>
            <person name="Yuan M.-L."/>
            <person name="Zhang Y.-L."/>
            <person name="Dai F.-H."/>
            <person name="Liu Y."/>
            <person name="Wang Q.-M."/>
            <person name="Zheng J.-J."/>
            <person name="Xu L."/>
            <person name="Holmes E.C."/>
            <person name="Zhang Y.-Z."/>
        </authorList>
    </citation>
    <scope>NUCLEOTIDE SEQUENCE [GENOMIC RNA]</scope>
</reference>
<reference key="2">
    <citation type="journal article" date="2020" name="J. Gen. Virol.">
        <title>A putative new SARS-CoV protein, 3c, encoded in an ORF overlapping ORF3a.</title>
        <authorList>
            <person name="Firth A.E."/>
        </authorList>
    </citation>
    <scope>CONCEPTUAL TRANSLATION</scope>
</reference>
<reference key="3">
    <citation type="journal article" date="2020" name="Infect. Genet. Evol.">
        <title>Coding potential and sequence conservation of SARS-CoV-2 and related animal viruses.</title>
        <authorList>
            <person name="Cagliani R."/>
            <person name="Forni D."/>
            <person name="Clerici M."/>
            <person name="Sironi M."/>
        </authorList>
    </citation>
    <scope>CONCEPTUAL TRANSLATION</scope>
</reference>
<protein>
    <recommendedName>
        <fullName evidence="3">ORF3c protein</fullName>
        <shortName>ORF3c</shortName>
    </recommendedName>
    <alternativeName>
        <fullName evidence="2">ORF3h protein</fullName>
        <shortName>ORF3h</shortName>
    </alternativeName>
</protein>
<organism>
    <name type="scientific">Severe acute respiratory syndrome coronavirus 2</name>
    <name type="common">2019-nCoV</name>
    <name type="synonym">SARS-CoV-2</name>
    <dbReference type="NCBI Taxonomy" id="2697049"/>
    <lineage>
        <taxon>Viruses</taxon>
        <taxon>Riboviria</taxon>
        <taxon>Orthornavirae</taxon>
        <taxon>Pisuviricota</taxon>
        <taxon>Pisoniviricetes</taxon>
        <taxon>Nidovirales</taxon>
        <taxon>Cornidovirineae</taxon>
        <taxon>Coronaviridae</taxon>
        <taxon>Orthocoronavirinae</taxon>
        <taxon>Betacoronavirus</taxon>
        <taxon>Sarbecovirus</taxon>
        <taxon>Severe acute respiratory syndrome coronavirus</taxon>
    </lineage>
</organism>
<name>ORF3C_SARS2</name>
<sequence length="41" mass="4858">MLLLQILFALLQRYRYKPHSLSDGLLLALHFLLFFRALPKS</sequence>
<organismHost>
    <name type="scientific">Homo sapiens</name>
    <name type="common">Human</name>
    <dbReference type="NCBI Taxonomy" id="9606"/>
</organismHost>
<evidence type="ECO:0000305" key="1"/>
<evidence type="ECO:0000305" key="2">
    <source>
    </source>
</evidence>
<evidence type="ECO:0000305" key="3">
    <source>
    </source>
</evidence>
<feature type="chain" id="PRO_0000452090" description="ORF3c protein">
    <location>
        <begin position="1"/>
        <end position="41"/>
    </location>
</feature>
<proteinExistence type="predicted"/>